<feature type="chain" id="PRO_1000044884" description="Chaperone protein HscA homolog">
    <location>
        <begin position="1"/>
        <end position="619"/>
    </location>
</feature>
<keyword id="KW-0067">ATP-binding</keyword>
<keyword id="KW-0143">Chaperone</keyword>
<keyword id="KW-0547">Nucleotide-binding</keyword>
<keyword id="KW-1185">Reference proteome</keyword>
<proteinExistence type="inferred from homology"/>
<name>HSCA_SHEAM</name>
<comment type="function">
    <text evidence="1">Chaperone involved in the maturation of iron-sulfur cluster-containing proteins. Has a low intrinsic ATPase activity which is markedly stimulated by HscB.</text>
</comment>
<comment type="similarity">
    <text evidence="1">Belongs to the heat shock protein 70 family.</text>
</comment>
<dbReference type="EMBL" id="CP000507">
    <property type="protein sequence ID" value="ABL99504.1"/>
    <property type="molecule type" value="Genomic_DNA"/>
</dbReference>
<dbReference type="RefSeq" id="WP_011759413.1">
    <property type="nucleotide sequence ID" value="NC_008700.1"/>
</dbReference>
<dbReference type="SMR" id="A1S548"/>
<dbReference type="STRING" id="326297.Sama_1297"/>
<dbReference type="KEGG" id="saz:Sama_1297"/>
<dbReference type="eggNOG" id="COG0443">
    <property type="taxonomic scope" value="Bacteria"/>
</dbReference>
<dbReference type="HOGENOM" id="CLU_005965_2_3_6"/>
<dbReference type="OrthoDB" id="9766019at2"/>
<dbReference type="Proteomes" id="UP000009175">
    <property type="component" value="Chromosome"/>
</dbReference>
<dbReference type="GO" id="GO:0005524">
    <property type="term" value="F:ATP binding"/>
    <property type="evidence" value="ECO:0007669"/>
    <property type="project" value="UniProtKB-KW"/>
</dbReference>
<dbReference type="GO" id="GO:0016887">
    <property type="term" value="F:ATP hydrolysis activity"/>
    <property type="evidence" value="ECO:0007669"/>
    <property type="project" value="UniProtKB-UniRule"/>
</dbReference>
<dbReference type="GO" id="GO:0140662">
    <property type="term" value="F:ATP-dependent protein folding chaperone"/>
    <property type="evidence" value="ECO:0007669"/>
    <property type="project" value="InterPro"/>
</dbReference>
<dbReference type="GO" id="GO:0051082">
    <property type="term" value="F:unfolded protein binding"/>
    <property type="evidence" value="ECO:0007669"/>
    <property type="project" value="InterPro"/>
</dbReference>
<dbReference type="GO" id="GO:0016226">
    <property type="term" value="P:iron-sulfur cluster assembly"/>
    <property type="evidence" value="ECO:0007669"/>
    <property type="project" value="InterPro"/>
</dbReference>
<dbReference type="CDD" id="cd10236">
    <property type="entry name" value="ASKHA_NBD_HSP70_HscA"/>
    <property type="match status" value="1"/>
</dbReference>
<dbReference type="FunFam" id="3.30.420.40:FF:000046">
    <property type="entry name" value="Chaperone protein HscA"/>
    <property type="match status" value="1"/>
</dbReference>
<dbReference type="FunFam" id="2.60.34.10:FF:000005">
    <property type="entry name" value="Chaperone protein HscA homolog"/>
    <property type="match status" value="1"/>
</dbReference>
<dbReference type="Gene3D" id="1.20.1270.10">
    <property type="match status" value="1"/>
</dbReference>
<dbReference type="Gene3D" id="3.30.420.40">
    <property type="match status" value="2"/>
</dbReference>
<dbReference type="Gene3D" id="3.90.640.10">
    <property type="entry name" value="Actin, Chain A, domain 4"/>
    <property type="match status" value="1"/>
</dbReference>
<dbReference type="Gene3D" id="2.60.34.10">
    <property type="entry name" value="Substrate Binding Domain Of DNAk, Chain A, domain 1"/>
    <property type="match status" value="1"/>
</dbReference>
<dbReference type="HAMAP" id="MF_00679">
    <property type="entry name" value="HscA"/>
    <property type="match status" value="1"/>
</dbReference>
<dbReference type="InterPro" id="IPR043129">
    <property type="entry name" value="ATPase_NBD"/>
</dbReference>
<dbReference type="InterPro" id="IPR018181">
    <property type="entry name" value="Heat_shock_70_CS"/>
</dbReference>
<dbReference type="InterPro" id="IPR042039">
    <property type="entry name" value="HscA_NBD"/>
</dbReference>
<dbReference type="InterPro" id="IPR029048">
    <property type="entry name" value="HSP70_C_sf"/>
</dbReference>
<dbReference type="InterPro" id="IPR029047">
    <property type="entry name" value="HSP70_peptide-bd_sf"/>
</dbReference>
<dbReference type="InterPro" id="IPR013126">
    <property type="entry name" value="Hsp_70_fam"/>
</dbReference>
<dbReference type="InterPro" id="IPR010236">
    <property type="entry name" value="ISC_FeS_clus_asmbl_HscA"/>
</dbReference>
<dbReference type="NCBIfam" id="TIGR01991">
    <property type="entry name" value="HscA"/>
    <property type="match status" value="1"/>
</dbReference>
<dbReference type="NCBIfam" id="NF003520">
    <property type="entry name" value="PRK05183.1"/>
    <property type="match status" value="1"/>
</dbReference>
<dbReference type="PANTHER" id="PTHR19375">
    <property type="entry name" value="HEAT SHOCK PROTEIN 70KDA"/>
    <property type="match status" value="1"/>
</dbReference>
<dbReference type="Pfam" id="PF00012">
    <property type="entry name" value="HSP70"/>
    <property type="match status" value="1"/>
</dbReference>
<dbReference type="PRINTS" id="PR00301">
    <property type="entry name" value="HEATSHOCK70"/>
</dbReference>
<dbReference type="SUPFAM" id="SSF53067">
    <property type="entry name" value="Actin-like ATPase domain"/>
    <property type="match status" value="2"/>
</dbReference>
<dbReference type="SUPFAM" id="SSF100934">
    <property type="entry name" value="Heat shock protein 70kD (HSP70), C-terminal subdomain"/>
    <property type="match status" value="1"/>
</dbReference>
<dbReference type="SUPFAM" id="SSF100920">
    <property type="entry name" value="Heat shock protein 70kD (HSP70), peptide-binding domain"/>
    <property type="match status" value="1"/>
</dbReference>
<dbReference type="PROSITE" id="PS00297">
    <property type="entry name" value="HSP70_1"/>
    <property type="match status" value="1"/>
</dbReference>
<dbReference type="PROSITE" id="PS00329">
    <property type="entry name" value="HSP70_2"/>
    <property type="match status" value="1"/>
</dbReference>
<sequence length="619" mass="65848">MALLQIAEPGQSAAPHQHRLAVGIDLGTTNSLVAAVRSGEARTLADAQGRHSLPSIVRYAKEGISVGQEAELHSATDAANTIVSVKRFMGRSLADIEAGSQRFPYQFSASENGLPLFNTPQGQVNPVQVSAEILRPLIARAEDTLGGSLEGAVITVPAYFDDAQRQGTKDAAQLLGVKVLRLLNEPTAAAIAYGLDSGQEGVIAVYDLGGGTFDISILRLNRGVFEVLATGGDSALGGDDFDHLLGGYLAQQWGLDLADTGLGRKLMIEARRVKEALTETDTVTATLEYQGQAYHHDIDRGTFDALIAALVKKTIAACRRALRDAGIDAGEVLETVMVGGSTRVPLVRSEVEAFFGKAPLTSIDPDRVVAIGAAIQADILVGNKPESDLLLLDVIPLSLGIETMGGLVEKIVSRNTTIPVARAQEFTTFKDGQTAMAFHVVQGERELVQDCRSLARFTLKGIPPLAAGAAHIRVTFQVDADGLLSVTAMEKSTGVKSSIQVKPSFGLSDTEIATMLKDSMKHAKEDISRRMLAEQQVEAARVLESLHSALAKDKVLLSEEELNDITAAMAELAEVAKGDDADAILAAIERLDNQTQEFAAKRMDNSIRNALKGQSVDTI</sequence>
<protein>
    <recommendedName>
        <fullName evidence="1">Chaperone protein HscA homolog</fullName>
    </recommendedName>
</protein>
<organism>
    <name type="scientific">Shewanella amazonensis (strain ATCC BAA-1098 / SB2B)</name>
    <dbReference type="NCBI Taxonomy" id="326297"/>
    <lineage>
        <taxon>Bacteria</taxon>
        <taxon>Pseudomonadati</taxon>
        <taxon>Pseudomonadota</taxon>
        <taxon>Gammaproteobacteria</taxon>
        <taxon>Alteromonadales</taxon>
        <taxon>Shewanellaceae</taxon>
        <taxon>Shewanella</taxon>
    </lineage>
</organism>
<accession>A1S548</accession>
<gene>
    <name evidence="1" type="primary">hscA</name>
    <name type="ordered locus">Sama_1297</name>
</gene>
<evidence type="ECO:0000255" key="1">
    <source>
        <dbReference type="HAMAP-Rule" id="MF_00679"/>
    </source>
</evidence>
<reference key="1">
    <citation type="submission" date="2006-12" db="EMBL/GenBank/DDBJ databases">
        <title>Complete sequence of Shewanella amazonensis SB2B.</title>
        <authorList>
            <consortium name="US DOE Joint Genome Institute"/>
            <person name="Copeland A."/>
            <person name="Lucas S."/>
            <person name="Lapidus A."/>
            <person name="Barry K."/>
            <person name="Detter J.C."/>
            <person name="Glavina del Rio T."/>
            <person name="Hammon N."/>
            <person name="Israni S."/>
            <person name="Dalin E."/>
            <person name="Tice H."/>
            <person name="Pitluck S."/>
            <person name="Munk A.C."/>
            <person name="Brettin T."/>
            <person name="Bruce D."/>
            <person name="Han C."/>
            <person name="Tapia R."/>
            <person name="Gilna P."/>
            <person name="Schmutz J."/>
            <person name="Larimer F."/>
            <person name="Land M."/>
            <person name="Hauser L."/>
            <person name="Kyrpides N."/>
            <person name="Mikhailova N."/>
            <person name="Fredrickson J."/>
            <person name="Richardson P."/>
        </authorList>
    </citation>
    <scope>NUCLEOTIDE SEQUENCE [LARGE SCALE GENOMIC DNA]</scope>
    <source>
        <strain>ATCC BAA-1098 / SB2B</strain>
    </source>
</reference>